<feature type="chain" id="PRO_0000049830" description="Uncharacterized protein YqjF">
    <location>
        <begin position="1"/>
        <end position="242"/>
    </location>
</feature>
<feature type="sequence conflict" description="In Ref. 1; BAA12612." evidence="1" ref="1">
    <original>R</original>
    <variation>K</variation>
    <location>
        <position position="20"/>
    </location>
</feature>
<organism>
    <name type="scientific">Bacillus subtilis (strain 168)</name>
    <dbReference type="NCBI Taxonomy" id="224308"/>
    <lineage>
        <taxon>Bacteria</taxon>
        <taxon>Bacillati</taxon>
        <taxon>Bacillota</taxon>
        <taxon>Bacilli</taxon>
        <taxon>Bacillales</taxon>
        <taxon>Bacillaceae</taxon>
        <taxon>Bacillus</taxon>
    </lineage>
</organism>
<sequence length="242" mass="28410">MTERFQQKNISVPDGIWIMRQTWNDVLFAHWPVDVSILRALVPSVLELDTYNGQAWISMLPFMLTNLRARYLPVIPGARAFPELNLRTYVTYKGKPGIYFFSLDADHRLAVLGARTFFHLPYFYADMKSEKNGDAIDYVSKRKNDKEAAFHAAYRPISAPFTAEKDSLDYWLTERYRLYTTYRNKLYYEDIHHHPWLLQNAEAEISVNTVTDAHGITLPESDPLLHYAKKQDVLFWPLRKWS</sequence>
<protein>
    <recommendedName>
        <fullName>Uncharacterized protein YqjF</fullName>
    </recommendedName>
</protein>
<reference key="1">
    <citation type="journal article" date="1996" name="Microbiology">
        <title>Systematic sequencing of the 283 kb 210 degrees-232 degrees region of the Bacillus subtilis genome containing the skin element and many sporulation genes.</title>
        <authorList>
            <person name="Mizuno M."/>
            <person name="Masuda S."/>
            <person name="Takemaru K."/>
            <person name="Hosono S."/>
            <person name="Sato T."/>
            <person name="Takeuchi M."/>
            <person name="Kobayashi Y."/>
        </authorList>
    </citation>
    <scope>NUCLEOTIDE SEQUENCE [GENOMIC DNA]</scope>
    <source>
        <strain>168 / JH642</strain>
    </source>
</reference>
<reference key="2">
    <citation type="journal article" date="1997" name="Nature">
        <title>The complete genome sequence of the Gram-positive bacterium Bacillus subtilis.</title>
        <authorList>
            <person name="Kunst F."/>
            <person name="Ogasawara N."/>
            <person name="Moszer I."/>
            <person name="Albertini A.M."/>
            <person name="Alloni G."/>
            <person name="Azevedo V."/>
            <person name="Bertero M.G."/>
            <person name="Bessieres P."/>
            <person name="Bolotin A."/>
            <person name="Borchert S."/>
            <person name="Borriss R."/>
            <person name="Boursier L."/>
            <person name="Brans A."/>
            <person name="Braun M."/>
            <person name="Brignell S.C."/>
            <person name="Bron S."/>
            <person name="Brouillet S."/>
            <person name="Bruschi C.V."/>
            <person name="Caldwell B."/>
            <person name="Capuano V."/>
            <person name="Carter N.M."/>
            <person name="Choi S.-K."/>
            <person name="Codani J.-J."/>
            <person name="Connerton I.F."/>
            <person name="Cummings N.J."/>
            <person name="Daniel R.A."/>
            <person name="Denizot F."/>
            <person name="Devine K.M."/>
            <person name="Duesterhoeft A."/>
            <person name="Ehrlich S.D."/>
            <person name="Emmerson P.T."/>
            <person name="Entian K.-D."/>
            <person name="Errington J."/>
            <person name="Fabret C."/>
            <person name="Ferrari E."/>
            <person name="Foulger D."/>
            <person name="Fritz C."/>
            <person name="Fujita M."/>
            <person name="Fujita Y."/>
            <person name="Fuma S."/>
            <person name="Galizzi A."/>
            <person name="Galleron N."/>
            <person name="Ghim S.-Y."/>
            <person name="Glaser P."/>
            <person name="Goffeau A."/>
            <person name="Golightly E.J."/>
            <person name="Grandi G."/>
            <person name="Guiseppi G."/>
            <person name="Guy B.J."/>
            <person name="Haga K."/>
            <person name="Haiech J."/>
            <person name="Harwood C.R."/>
            <person name="Henaut A."/>
            <person name="Hilbert H."/>
            <person name="Holsappel S."/>
            <person name="Hosono S."/>
            <person name="Hullo M.-F."/>
            <person name="Itaya M."/>
            <person name="Jones L.-M."/>
            <person name="Joris B."/>
            <person name="Karamata D."/>
            <person name="Kasahara Y."/>
            <person name="Klaerr-Blanchard M."/>
            <person name="Klein C."/>
            <person name="Kobayashi Y."/>
            <person name="Koetter P."/>
            <person name="Koningstein G."/>
            <person name="Krogh S."/>
            <person name="Kumano M."/>
            <person name="Kurita K."/>
            <person name="Lapidus A."/>
            <person name="Lardinois S."/>
            <person name="Lauber J."/>
            <person name="Lazarevic V."/>
            <person name="Lee S.-M."/>
            <person name="Levine A."/>
            <person name="Liu H."/>
            <person name="Masuda S."/>
            <person name="Mauel C."/>
            <person name="Medigue C."/>
            <person name="Medina N."/>
            <person name="Mellado R.P."/>
            <person name="Mizuno M."/>
            <person name="Moestl D."/>
            <person name="Nakai S."/>
            <person name="Noback M."/>
            <person name="Noone D."/>
            <person name="O'Reilly M."/>
            <person name="Ogawa K."/>
            <person name="Ogiwara A."/>
            <person name="Oudega B."/>
            <person name="Park S.-H."/>
            <person name="Parro V."/>
            <person name="Pohl T.M."/>
            <person name="Portetelle D."/>
            <person name="Porwollik S."/>
            <person name="Prescott A.M."/>
            <person name="Presecan E."/>
            <person name="Pujic P."/>
            <person name="Purnelle B."/>
            <person name="Rapoport G."/>
            <person name="Rey M."/>
            <person name="Reynolds S."/>
            <person name="Rieger M."/>
            <person name="Rivolta C."/>
            <person name="Rocha E."/>
            <person name="Roche B."/>
            <person name="Rose M."/>
            <person name="Sadaie Y."/>
            <person name="Sato T."/>
            <person name="Scanlan E."/>
            <person name="Schleich S."/>
            <person name="Schroeter R."/>
            <person name="Scoffone F."/>
            <person name="Sekiguchi J."/>
            <person name="Sekowska A."/>
            <person name="Seror S.J."/>
            <person name="Serror P."/>
            <person name="Shin B.-S."/>
            <person name="Soldo B."/>
            <person name="Sorokin A."/>
            <person name="Tacconi E."/>
            <person name="Takagi T."/>
            <person name="Takahashi H."/>
            <person name="Takemaru K."/>
            <person name="Takeuchi M."/>
            <person name="Tamakoshi A."/>
            <person name="Tanaka T."/>
            <person name="Terpstra P."/>
            <person name="Tognoni A."/>
            <person name="Tosato V."/>
            <person name="Uchiyama S."/>
            <person name="Vandenbol M."/>
            <person name="Vannier F."/>
            <person name="Vassarotti A."/>
            <person name="Viari A."/>
            <person name="Wambutt R."/>
            <person name="Wedler E."/>
            <person name="Wedler H."/>
            <person name="Weitzenegger T."/>
            <person name="Winters P."/>
            <person name="Wipat A."/>
            <person name="Yamamoto H."/>
            <person name="Yamane K."/>
            <person name="Yasumoto K."/>
            <person name="Yata K."/>
            <person name="Yoshida K."/>
            <person name="Yoshikawa H.-F."/>
            <person name="Zumstein E."/>
            <person name="Yoshikawa H."/>
            <person name="Danchin A."/>
        </authorList>
    </citation>
    <scope>NUCLEOTIDE SEQUENCE [LARGE SCALE GENOMIC DNA]</scope>
    <source>
        <strain>168</strain>
    </source>
</reference>
<reference key="3">
    <citation type="journal article" date="1999" name="Genome Res.">
        <title>Detecting and analyzing DNA sequencing errors: toward a higher quality of the Bacillus subtilis genome sequence.</title>
        <authorList>
            <person name="Medigue C."/>
            <person name="Rose M."/>
            <person name="Viari A."/>
            <person name="Danchin A."/>
        </authorList>
    </citation>
    <scope>SEQUENCE REVISION</scope>
</reference>
<reference key="4">
    <citation type="journal article" date="2009" name="Microbiology">
        <title>From a consortium sequence to a unified sequence: the Bacillus subtilis 168 reference genome a decade later.</title>
        <authorList>
            <person name="Barbe V."/>
            <person name="Cruveiller S."/>
            <person name="Kunst F."/>
            <person name="Lenoble P."/>
            <person name="Meurice G."/>
            <person name="Sekowska A."/>
            <person name="Vallenet D."/>
            <person name="Wang T."/>
            <person name="Moszer I."/>
            <person name="Medigue C."/>
            <person name="Danchin A."/>
        </authorList>
    </citation>
    <scope>SEQUENCE REVISION TO 20</scope>
</reference>
<gene>
    <name type="primary">yqjF</name>
    <name type="ordered locus">BSU23900</name>
</gene>
<proteinExistence type="predicted"/>
<dbReference type="EMBL" id="D84432">
    <property type="protein sequence ID" value="BAA12612.1"/>
    <property type="status" value="ALT_FRAME"/>
    <property type="molecule type" value="Genomic_DNA"/>
</dbReference>
<dbReference type="EMBL" id="AL009126">
    <property type="protein sequence ID" value="CAB14321.3"/>
    <property type="molecule type" value="Genomic_DNA"/>
</dbReference>
<dbReference type="PIR" id="F69963">
    <property type="entry name" value="F69963"/>
</dbReference>
<dbReference type="RefSeq" id="NP_390270.3">
    <property type="nucleotide sequence ID" value="NC_000964.3"/>
</dbReference>
<dbReference type="RefSeq" id="WP_004399111.1">
    <property type="nucleotide sequence ID" value="NZ_OZ025638.1"/>
</dbReference>
<dbReference type="SMR" id="P54543"/>
<dbReference type="FunCoup" id="P54543">
    <property type="interactions" value="1"/>
</dbReference>
<dbReference type="STRING" id="224308.BSU23900"/>
<dbReference type="PaxDb" id="224308-BSU23900"/>
<dbReference type="EnsemblBacteria" id="CAB14321">
    <property type="protein sequence ID" value="CAB14321"/>
    <property type="gene ID" value="BSU_23900"/>
</dbReference>
<dbReference type="GeneID" id="938688"/>
<dbReference type="KEGG" id="bsu:BSU23900"/>
<dbReference type="PATRIC" id="fig|224308.179.peg.2603"/>
<dbReference type="eggNOG" id="COG3361">
    <property type="taxonomic scope" value="Bacteria"/>
</dbReference>
<dbReference type="InParanoid" id="P54543"/>
<dbReference type="OrthoDB" id="150993at2"/>
<dbReference type="PhylomeDB" id="P54543"/>
<dbReference type="BioCyc" id="BSUB:BSU23900-MONOMER"/>
<dbReference type="Proteomes" id="UP000001570">
    <property type="component" value="Chromosome"/>
</dbReference>
<dbReference type="Gene3D" id="2.40.400.10">
    <property type="entry name" value="Acetoacetate decarboxylase-like"/>
    <property type="match status" value="1"/>
</dbReference>
<dbReference type="InterPro" id="IPR023375">
    <property type="entry name" value="ADC_dom_sf"/>
</dbReference>
<dbReference type="InterPro" id="IPR018644">
    <property type="entry name" value="DUF2071"/>
</dbReference>
<dbReference type="PANTHER" id="PTHR39186:SF1">
    <property type="entry name" value="DUF2071 DOMAIN-CONTAINING PROTEIN"/>
    <property type="match status" value="1"/>
</dbReference>
<dbReference type="PANTHER" id="PTHR39186">
    <property type="entry name" value="DUF2071 FAMILY PROTEIN"/>
    <property type="match status" value="1"/>
</dbReference>
<dbReference type="Pfam" id="PF09844">
    <property type="entry name" value="DUF2071"/>
    <property type="match status" value="1"/>
</dbReference>
<dbReference type="SUPFAM" id="SSF160104">
    <property type="entry name" value="Acetoacetate decarboxylase-like"/>
    <property type="match status" value="1"/>
</dbReference>
<comment type="sequence caution" evidence="1">
    <conflict type="frameshift">
        <sequence resource="EMBL-CDS" id="BAA12612"/>
    </conflict>
</comment>
<keyword id="KW-1185">Reference proteome</keyword>
<name>YQJF_BACSU</name>
<accession>P54543</accession>
<evidence type="ECO:0000305" key="1"/>